<organism>
    <name type="scientific">Desulfatibacillum aliphaticivorans</name>
    <dbReference type="NCBI Taxonomy" id="218208"/>
    <lineage>
        <taxon>Bacteria</taxon>
        <taxon>Pseudomonadati</taxon>
        <taxon>Thermodesulfobacteriota</taxon>
        <taxon>Desulfobacteria</taxon>
        <taxon>Desulfobacterales</taxon>
        <taxon>Desulfatibacillaceae</taxon>
        <taxon>Desulfatibacillum</taxon>
    </lineage>
</organism>
<proteinExistence type="inferred from homology"/>
<keyword id="KW-0240">DNA-directed RNA polymerase</keyword>
<keyword id="KW-0548">Nucleotidyltransferase</keyword>
<keyword id="KW-1185">Reference proteome</keyword>
<keyword id="KW-0804">Transcription</keyword>
<keyword id="KW-0808">Transferase</keyword>
<gene>
    <name evidence="1" type="primary">rpoB</name>
    <name type="ordered locus">Dalk_1921</name>
</gene>
<comment type="function">
    <text evidence="1">DNA-dependent RNA polymerase catalyzes the transcription of DNA into RNA using the four ribonucleoside triphosphates as substrates.</text>
</comment>
<comment type="catalytic activity">
    <reaction evidence="1">
        <text>RNA(n) + a ribonucleoside 5'-triphosphate = RNA(n+1) + diphosphate</text>
        <dbReference type="Rhea" id="RHEA:21248"/>
        <dbReference type="Rhea" id="RHEA-COMP:14527"/>
        <dbReference type="Rhea" id="RHEA-COMP:17342"/>
        <dbReference type="ChEBI" id="CHEBI:33019"/>
        <dbReference type="ChEBI" id="CHEBI:61557"/>
        <dbReference type="ChEBI" id="CHEBI:140395"/>
        <dbReference type="EC" id="2.7.7.6"/>
    </reaction>
</comment>
<comment type="subunit">
    <text evidence="1">The RNAP catalytic core consists of 2 alpha, 1 beta, 1 beta' and 1 omega subunit. When a sigma factor is associated with the core the holoenzyme is formed, which can initiate transcription.</text>
</comment>
<comment type="similarity">
    <text evidence="1">Belongs to the RNA polymerase beta chain family.</text>
</comment>
<accession>B8FEU1</accession>
<dbReference type="EC" id="2.7.7.6" evidence="1"/>
<dbReference type="EMBL" id="CP001322">
    <property type="protein sequence ID" value="ACL03618.1"/>
    <property type="molecule type" value="Genomic_DNA"/>
</dbReference>
<dbReference type="RefSeq" id="WP_012611049.1">
    <property type="nucleotide sequence ID" value="NC_011768.1"/>
</dbReference>
<dbReference type="SMR" id="B8FEU1"/>
<dbReference type="KEGG" id="dal:Dalk_1921"/>
<dbReference type="eggNOG" id="COG0085">
    <property type="taxonomic scope" value="Bacteria"/>
</dbReference>
<dbReference type="HOGENOM" id="CLU_000524_4_3_7"/>
<dbReference type="Proteomes" id="UP000000739">
    <property type="component" value="Chromosome"/>
</dbReference>
<dbReference type="GO" id="GO:0000428">
    <property type="term" value="C:DNA-directed RNA polymerase complex"/>
    <property type="evidence" value="ECO:0007669"/>
    <property type="project" value="UniProtKB-KW"/>
</dbReference>
<dbReference type="GO" id="GO:0003677">
    <property type="term" value="F:DNA binding"/>
    <property type="evidence" value="ECO:0007669"/>
    <property type="project" value="UniProtKB-UniRule"/>
</dbReference>
<dbReference type="GO" id="GO:0003899">
    <property type="term" value="F:DNA-directed RNA polymerase activity"/>
    <property type="evidence" value="ECO:0007669"/>
    <property type="project" value="UniProtKB-UniRule"/>
</dbReference>
<dbReference type="GO" id="GO:0032549">
    <property type="term" value="F:ribonucleoside binding"/>
    <property type="evidence" value="ECO:0007669"/>
    <property type="project" value="InterPro"/>
</dbReference>
<dbReference type="GO" id="GO:0006351">
    <property type="term" value="P:DNA-templated transcription"/>
    <property type="evidence" value="ECO:0007669"/>
    <property type="project" value="UniProtKB-UniRule"/>
</dbReference>
<dbReference type="CDD" id="cd00653">
    <property type="entry name" value="RNA_pol_B_RPB2"/>
    <property type="match status" value="1"/>
</dbReference>
<dbReference type="Gene3D" id="2.40.50.100">
    <property type="match status" value="1"/>
</dbReference>
<dbReference type="Gene3D" id="2.40.50.150">
    <property type="match status" value="1"/>
</dbReference>
<dbReference type="Gene3D" id="3.90.1100.10">
    <property type="match status" value="2"/>
</dbReference>
<dbReference type="Gene3D" id="2.30.150.10">
    <property type="entry name" value="DNA-directed RNA polymerase, beta subunit, external 1 domain"/>
    <property type="match status" value="1"/>
</dbReference>
<dbReference type="Gene3D" id="2.40.270.10">
    <property type="entry name" value="DNA-directed RNA polymerase, subunit 2, domain 6"/>
    <property type="match status" value="1"/>
</dbReference>
<dbReference type="Gene3D" id="3.90.1800.10">
    <property type="entry name" value="RNA polymerase alpha subunit dimerisation domain"/>
    <property type="match status" value="1"/>
</dbReference>
<dbReference type="Gene3D" id="3.90.1110.10">
    <property type="entry name" value="RNA polymerase Rpb2, domain 2"/>
    <property type="match status" value="1"/>
</dbReference>
<dbReference type="HAMAP" id="MF_01321">
    <property type="entry name" value="RNApol_bact_RpoB"/>
    <property type="match status" value="1"/>
</dbReference>
<dbReference type="InterPro" id="IPR042107">
    <property type="entry name" value="DNA-dir_RNA_pol_bsu_ext_1_sf"/>
</dbReference>
<dbReference type="InterPro" id="IPR019462">
    <property type="entry name" value="DNA-dir_RNA_pol_bsu_external_1"/>
</dbReference>
<dbReference type="InterPro" id="IPR015712">
    <property type="entry name" value="DNA-dir_RNA_pol_su2"/>
</dbReference>
<dbReference type="InterPro" id="IPR007120">
    <property type="entry name" value="DNA-dir_RNAP_su2_dom"/>
</dbReference>
<dbReference type="InterPro" id="IPR037033">
    <property type="entry name" value="DNA-dir_RNAP_su2_hyb_sf"/>
</dbReference>
<dbReference type="InterPro" id="IPR010243">
    <property type="entry name" value="RNA_pol_bsu_bac"/>
</dbReference>
<dbReference type="InterPro" id="IPR007121">
    <property type="entry name" value="RNA_pol_bsu_CS"/>
</dbReference>
<dbReference type="InterPro" id="IPR007644">
    <property type="entry name" value="RNA_pol_bsu_protrusion"/>
</dbReference>
<dbReference type="InterPro" id="IPR007642">
    <property type="entry name" value="RNA_pol_Rpb2_2"/>
</dbReference>
<dbReference type="InterPro" id="IPR037034">
    <property type="entry name" value="RNA_pol_Rpb2_2_sf"/>
</dbReference>
<dbReference type="InterPro" id="IPR007645">
    <property type="entry name" value="RNA_pol_Rpb2_3"/>
</dbReference>
<dbReference type="InterPro" id="IPR007641">
    <property type="entry name" value="RNA_pol_Rpb2_7"/>
</dbReference>
<dbReference type="InterPro" id="IPR014724">
    <property type="entry name" value="RNA_pol_RPB2_OB-fold"/>
</dbReference>
<dbReference type="NCBIfam" id="NF001616">
    <property type="entry name" value="PRK00405.1"/>
    <property type="match status" value="1"/>
</dbReference>
<dbReference type="NCBIfam" id="TIGR02013">
    <property type="entry name" value="rpoB"/>
    <property type="match status" value="1"/>
</dbReference>
<dbReference type="PANTHER" id="PTHR20856">
    <property type="entry name" value="DNA-DIRECTED RNA POLYMERASE I SUBUNIT 2"/>
    <property type="match status" value="1"/>
</dbReference>
<dbReference type="Pfam" id="PF04563">
    <property type="entry name" value="RNA_pol_Rpb2_1"/>
    <property type="match status" value="1"/>
</dbReference>
<dbReference type="Pfam" id="PF04561">
    <property type="entry name" value="RNA_pol_Rpb2_2"/>
    <property type="match status" value="2"/>
</dbReference>
<dbReference type="Pfam" id="PF04565">
    <property type="entry name" value="RNA_pol_Rpb2_3"/>
    <property type="match status" value="1"/>
</dbReference>
<dbReference type="Pfam" id="PF10385">
    <property type="entry name" value="RNA_pol_Rpb2_45"/>
    <property type="match status" value="1"/>
</dbReference>
<dbReference type="Pfam" id="PF00562">
    <property type="entry name" value="RNA_pol_Rpb2_6"/>
    <property type="match status" value="1"/>
</dbReference>
<dbReference type="Pfam" id="PF04560">
    <property type="entry name" value="RNA_pol_Rpb2_7"/>
    <property type="match status" value="1"/>
</dbReference>
<dbReference type="SUPFAM" id="SSF64484">
    <property type="entry name" value="beta and beta-prime subunits of DNA dependent RNA-polymerase"/>
    <property type="match status" value="1"/>
</dbReference>
<dbReference type="PROSITE" id="PS01166">
    <property type="entry name" value="RNA_POL_BETA"/>
    <property type="match status" value="1"/>
</dbReference>
<sequence>MADRPLTQQRLRKSFGKIAKIVDIPNLIEMQRISYQRFLQMDVPPEKRETIGLQAVFHSVFPIRDFSGTASLEFVSYRFGEIKYSVEDCVHRGMTYEVPIRITVRLVVFDVDKEKGIQNIRDIKEQEIYFGTIPLMTEQGTFVINGTERVVVSQLHRSSGVFFDHDKGKSHASGKVIYTARIIPVRGSWIDMEIDPKDVLYIRIDRRRKFPATLLFKAFGYSTEDLLNYFYQTEKLTLTPKTLFKEFDAKTLRGQRASITVKMPDSDEVIVKKGRLFTQRAVKTMAQAGIEKVAILQEDLEDKVLARRVLDPKTGEVLYPANHEIDEATLEAMRDAGVQKFEILYSAPGTGGDSVRKALLLDKVESREEALVEIYRRLRPSNPSTVEVAKDFIDQLFFRPSHYDLSAVGRMKLNMRLGLDTPVEVKTLRREDILLTAKTLVDLKDSQGAVDDIDHLGNRRVRAVGELLENQYRIGLVRMERAIKERMSLQEIDALMPNDLINPKPVSAVVKEFFGTSQLSQFMDQTNPLSEVTHKRRLSALGPGGLTRERAGFEVRDVHPSHYGRICPIETPEGPNIGLIVSLSTYARVNEFGFVETPYRVVTEGQATKEIKYLSAMEEKDLPIAQANAPLDEEGFFINPTVSSRVEGELTIVKKEDVKLMDISPNQLVSVSSSMIPFLENDDANRALMGSNMQRQAVPLLATEAPLIGTGLERVVARDSGVTLVAKRDGKVVAVDASRIVLQHEDERKDRMDKQVTIYNLSKFTRSNQNTCFNQRPIVKLGQEVKAGDIIADGPATENGELALGRNVTVAFLPWGGYNFEDSILVSERLVRDGVFTSVHIEEFEVVSRDTKLGKEEITRDIPNVGEEALKNLDDSGIVRLGAEVRPGDILVGKITPKGETQLSPEEKLLRAIFGEKAGDVKDTSLRVPPGVEGVVVDAKVFARRGVEKDDRTRLIEDEEIAALEKDRDDELKIMEDTVRSKLITIVLGQEATAPVKKGKAVLIPKGQPITAEMLEDCPLAPLEALVLKDEDHSERVHELLEIYREQRESVQMSFEEQVNRYQKGDDLPPGVIKMVKIYVAMKRRLSVGDKMAGRHGNKGVVSCILPQEDLPYFENGTPVDMVLNPLGVPSRMNVGQILEIHLGRAAKSLGDQIEALLEEQKLDGLRQKMQEIFSSDADEVAGLTEQELLEVAGQYKRGVHMATPVFDGAKEDEITDLLSSAGVSPSGQAVLYDGRTGERFKGEITVGTMYMLKLHHLVDDKIHARSIGPYSLVTQQPLGGKAQFGGQRLGEMEVWAMEAYGAAYALQEFLTVKSDDMVGRTRMYEKIVKGQNVLEPGMPESFNVLVKELQSLGLEMSLIEEAK</sequence>
<protein>
    <recommendedName>
        <fullName evidence="1">DNA-directed RNA polymerase subunit beta</fullName>
        <shortName evidence="1">RNAP subunit beta</shortName>
        <ecNumber evidence="1">2.7.7.6</ecNumber>
    </recommendedName>
    <alternativeName>
        <fullName evidence="1">RNA polymerase subunit beta</fullName>
    </alternativeName>
    <alternativeName>
        <fullName evidence="1">Transcriptase subunit beta</fullName>
    </alternativeName>
</protein>
<reference key="1">
    <citation type="journal article" date="2012" name="Environ. Microbiol.">
        <title>The genome sequence of Desulfatibacillum alkenivorans AK-01: a blueprint for anaerobic alkane oxidation.</title>
        <authorList>
            <person name="Callaghan A.V."/>
            <person name="Morris B.E."/>
            <person name="Pereira I.A."/>
            <person name="McInerney M.J."/>
            <person name="Austin R.N."/>
            <person name="Groves J.T."/>
            <person name="Kukor J.J."/>
            <person name="Suflita J.M."/>
            <person name="Young L.Y."/>
            <person name="Zylstra G.J."/>
            <person name="Wawrik B."/>
        </authorList>
    </citation>
    <scope>NUCLEOTIDE SEQUENCE [LARGE SCALE GENOMIC DNA]</scope>
    <source>
        <strain>AK-01</strain>
    </source>
</reference>
<feature type="chain" id="PRO_1000141684" description="DNA-directed RNA polymerase subunit beta">
    <location>
        <begin position="1"/>
        <end position="1364"/>
    </location>
</feature>
<name>RPOB_DESAL</name>
<evidence type="ECO:0000255" key="1">
    <source>
        <dbReference type="HAMAP-Rule" id="MF_01321"/>
    </source>
</evidence>